<dbReference type="EMBL" id="M24453">
    <property type="protein sequence ID" value="AAA43470.1"/>
    <property type="molecule type" value="Genomic_RNA"/>
</dbReference>
<dbReference type="SMR" id="P16984"/>
<dbReference type="ABCD" id="P16984">
    <property type="antibodies" value="2 sequenced antibodies"/>
</dbReference>
<dbReference type="GO" id="GO:0019029">
    <property type="term" value="C:helical viral capsid"/>
    <property type="evidence" value="ECO:0007669"/>
    <property type="project" value="UniProtKB-UniRule"/>
</dbReference>
<dbReference type="GO" id="GO:0043657">
    <property type="term" value="C:host cell"/>
    <property type="evidence" value="ECO:0007669"/>
    <property type="project" value="GOC"/>
</dbReference>
<dbReference type="GO" id="GO:0042025">
    <property type="term" value="C:host cell nucleus"/>
    <property type="evidence" value="ECO:0007669"/>
    <property type="project" value="UniProtKB-SubCell"/>
</dbReference>
<dbReference type="GO" id="GO:1990904">
    <property type="term" value="C:ribonucleoprotein complex"/>
    <property type="evidence" value="ECO:0007669"/>
    <property type="project" value="UniProtKB-KW"/>
</dbReference>
<dbReference type="GO" id="GO:0019013">
    <property type="term" value="C:viral nucleocapsid"/>
    <property type="evidence" value="ECO:0007669"/>
    <property type="project" value="UniProtKB-UniRule"/>
</dbReference>
<dbReference type="GO" id="GO:0003723">
    <property type="term" value="F:RNA binding"/>
    <property type="evidence" value="ECO:0007669"/>
    <property type="project" value="UniProtKB-UniRule"/>
</dbReference>
<dbReference type="GO" id="GO:0005198">
    <property type="term" value="F:structural molecule activity"/>
    <property type="evidence" value="ECO:0007669"/>
    <property type="project" value="UniProtKB-UniRule"/>
</dbReference>
<dbReference type="GO" id="GO:0046718">
    <property type="term" value="P:symbiont entry into host cell"/>
    <property type="evidence" value="ECO:0007669"/>
    <property type="project" value="UniProtKB-KW"/>
</dbReference>
<dbReference type="GO" id="GO:0075732">
    <property type="term" value="P:viral penetration into host nucleus"/>
    <property type="evidence" value="ECO:0007669"/>
    <property type="project" value="UniProtKB-UniRule"/>
</dbReference>
<dbReference type="HAMAP" id="MF_04070">
    <property type="entry name" value="INFV_NCAP"/>
    <property type="match status" value="1"/>
</dbReference>
<dbReference type="InterPro" id="IPR002141">
    <property type="entry name" value="Flu_NP"/>
</dbReference>
<dbReference type="Pfam" id="PF00506">
    <property type="entry name" value="Flu_NP"/>
    <property type="match status" value="1"/>
</dbReference>
<dbReference type="SUPFAM" id="SSF161003">
    <property type="entry name" value="flu NP-like"/>
    <property type="match status" value="1"/>
</dbReference>
<sequence>MASQGTKRSYEQMETGGERQNATEIRASVGRMVGGIGRFYIQMCTELKLSDYEGRLIQNSITIERMVLSAFDERRNKYLEEHPSAGKDPKKTGGPIYRRRDGKWMRELTLYDKEEIRRIWRQANNGEDATAGLTHLMIWHSNLNDATYQRTRALVRTGMDPRMCSLMQGSTLPRRSGAAGAAVKGVGTIVMELIRMIKRGINDRNFWRGENGRRTRIAYERMCNILKGKFQTAAQRAIMDQVRESRNPGNAEIEDLIFLARSALILRGSVAHKSCLPACVYGLAVASGYDFEREGYSLVGIDPFRLLQNSQVFSLIRPNENPAHKSQLVWMACHSAAFEDLRVSSFIRGTRVVPRGQLSTRGVQIASNENMETMDSSTLELRSRYWAIRTRSGGNTNQQRASAGQISVQPTFSVQRNLPFERATIMAAFTGNTEGRTSDMRTEIIRMMESARPEDVSFQGRGVFELSDEKATNPIVPSFDMSNEGSYFFGDNAEEYDN</sequence>
<accession>P16984</accession>
<evidence type="ECO:0000255" key="1">
    <source>
        <dbReference type="HAMAP-Rule" id="MF_04070"/>
    </source>
</evidence>
<evidence type="ECO:0000256" key="2">
    <source>
        <dbReference type="SAM" id="MobiDB-lite"/>
    </source>
</evidence>
<organism>
    <name type="scientific">Influenza A virus (strain A/Chicken/Germany/n/1949 H10N7)</name>
    <dbReference type="NCBI Taxonomy" id="11339"/>
    <lineage>
        <taxon>Viruses</taxon>
        <taxon>Riboviria</taxon>
        <taxon>Orthornavirae</taxon>
        <taxon>Negarnaviricota</taxon>
        <taxon>Polyploviricotina</taxon>
        <taxon>Insthoviricetes</taxon>
        <taxon>Articulavirales</taxon>
        <taxon>Orthomyxoviridae</taxon>
        <taxon>Alphainfluenzavirus</taxon>
        <taxon>Alphainfluenzavirus influenzae</taxon>
        <taxon>Influenza A virus</taxon>
    </lineage>
</organism>
<reference key="1">
    <citation type="journal article" date="1988" name="Arch. Virol.">
        <title>Comparison of the nucleoprotein genes of a chicken and a mink influenza A H 10 virus.</title>
        <authorList>
            <person name="Reinhardt U."/>
            <person name="Scholtissek C."/>
        </authorList>
    </citation>
    <scope>NUCLEOTIDE SEQUENCE [GENOMIC RNA]</scope>
</reference>
<protein>
    <recommendedName>
        <fullName evidence="1">Nucleoprotein</fullName>
    </recommendedName>
    <alternativeName>
        <fullName evidence="1">Nucleocapsid protein</fullName>
        <shortName evidence="1">Protein N</shortName>
    </alternativeName>
</protein>
<proteinExistence type="inferred from homology"/>
<comment type="function">
    <text evidence="1">Encapsidates the negative strand viral RNA, protecting it from nucleases. The encapsidated genomic RNA is termed the ribonucleoprotein (RNP) and serves as template for transcription and replication. The RNP needs to be localized in the host nucleus to start an infectious cycle, but is too large to diffuse through the nuclear pore complex. NP comprises at least 2 nuclear localization signals that are responsible for the active RNP import into the nucleus through cellular importin alpha/beta pathway. Later in the infection, nclear export of RNPs are mediated through viral proteins NEP interacting with M1 which binds nucleoproteins. It is possible that nucleoprotein binds directly host exportin-1/XPO1 and plays an active role in RNPs nuclear export. M1 interaction with RNP seems to hide nucleoprotein's nuclear localization signals. Soon after a virion infects a new cell, M1 dissociates from the RNP under acidification of the virion driven by M2 protein. Dissociation of M1 from RNP unmasks nucleoprotein's nuclear localization signals, targeting the RNP to the nucleus.</text>
</comment>
<comment type="subunit">
    <text evidence="1">Homomultimerizes to form the nucleocapsid. May bind host exportin-1/XPO1. Binds to viral genomic RNA. Protein-RNA contacts are mediated by a combination of electrostatic interactions between positively charged residues and the phosphate backbone and planar interactions between aromatic side chains and bases.</text>
</comment>
<comment type="subcellular location">
    <subcellularLocation>
        <location evidence="1">Virion</location>
    </subcellularLocation>
    <subcellularLocation>
        <location evidence="1">Host nucleus</location>
    </subcellularLocation>
</comment>
<comment type="PTM">
    <text evidence="1">Late in virus-infected cells, may be cleaved from a 56-kDa protein to a 53-kDa protein by a cellular caspase. This cleavage might be a marker for the onset of apoptosis in infected cells or have a specific function in virus host interaction.</text>
</comment>
<comment type="similarity">
    <text evidence="1">Belongs to the influenza viruses nucleoprotein family.</text>
</comment>
<organismHost>
    <name type="scientific">Aves</name>
    <dbReference type="NCBI Taxonomy" id="8782"/>
</organismHost>
<keyword id="KW-0167">Capsid protein</keyword>
<keyword id="KW-1139">Helical capsid protein</keyword>
<keyword id="KW-1048">Host nucleus</keyword>
<keyword id="KW-0945">Host-virus interaction</keyword>
<keyword id="KW-0687">Ribonucleoprotein</keyword>
<keyword id="KW-0694">RNA-binding</keyword>
<keyword id="KW-0543">Viral nucleoprotein</keyword>
<keyword id="KW-1163">Viral penetration into host nucleus</keyword>
<keyword id="KW-0946">Virion</keyword>
<keyword id="KW-1160">Virus entry into host cell</keyword>
<gene>
    <name evidence="1" type="primary">NP</name>
</gene>
<feature type="chain" id="PRO_0000079029" description="Nucleoprotein">
    <location>
        <begin position="1"/>
        <end position="498"/>
    </location>
</feature>
<feature type="region of interest" description="Disordered" evidence="2">
    <location>
        <begin position="1"/>
        <end position="21"/>
    </location>
</feature>
<feature type="region of interest" description="Disordered" evidence="2">
    <location>
        <begin position="79"/>
        <end position="98"/>
    </location>
</feature>
<feature type="short sequence motif" description="Unconventional nuclear localization signal" evidence="1">
    <location>
        <begin position="1"/>
        <end position="18"/>
    </location>
</feature>
<feature type="short sequence motif" description="Bipartite nuclear localization signal" evidence="1">
    <location>
        <begin position="198"/>
        <end position="216"/>
    </location>
</feature>
<feature type="compositionally biased region" description="Basic and acidic residues" evidence="2">
    <location>
        <begin position="79"/>
        <end position="91"/>
    </location>
</feature>
<name>NCAP_I49A0</name>